<evidence type="ECO:0000255" key="1">
    <source>
        <dbReference type="HAMAP-Rule" id="MF_04088"/>
    </source>
</evidence>
<keyword id="KW-1035">Host cytoplasm</keyword>
<keyword id="KW-1037">Host cytoskeleton</keyword>
<keyword id="KW-0945">Host-virus interaction</keyword>
<keyword id="KW-1090">Inhibition of host innate immune response by virus</keyword>
<keyword id="KW-1092">Inhibition of host IRF3 by virus</keyword>
<keyword id="KW-1093">Inhibition of host IRF7 by virus</keyword>
<keyword id="KW-1113">Inhibition of host RLR pathway by virus</keyword>
<keyword id="KW-0922">Interferon antiviral system evasion</keyword>
<keyword id="KW-0479">Metal-binding</keyword>
<keyword id="KW-0694">RNA-binding</keyword>
<keyword id="KW-0899">Viral immunoevasion</keyword>
<protein>
    <recommendedName>
        <fullName evidence="1">Non-structural protein 1</fullName>
        <shortName evidence="1">NSP1</shortName>
    </recommendedName>
    <alternativeName>
        <fullName evidence="1">NCVP2</fullName>
    </alternativeName>
    <alternativeName>
        <fullName evidence="1">Non-structural RNA-binding protein 53</fullName>
        <shortName evidence="1">NS53</shortName>
    </alternativeName>
</protein>
<accession>Q76VV3</accession>
<comment type="function">
    <text evidence="1">Plays a role in the inhibition of host innate immunity by inducing the degradation of key host factors required to activate interferon production such as IRF3, IRF5 or IRF7. Associates with components of cullin RING ligases (CRLs) including CUL1 or CUL3, which are essential multisubunit ubiquitination complexes, to modulate their activities.</text>
</comment>
<comment type="subunit">
    <text evidence="1">Interacts (via C-terminus) with host IRF3; this interaction leads to IRF3 degradation. Interacts with host IRF7; this interaction leads to IRF7 degradation. Interacts with host CUL1 and CUL3.</text>
</comment>
<comment type="subcellular location">
    <subcellularLocation>
        <location evidence="1">Host cytoplasm</location>
        <location evidence="1">Host cytoskeleton</location>
    </subcellularLocation>
</comment>
<comment type="domain">
    <text evidence="1">The integrity of the zinc-binding domain in NSP1 is important for degradation of host IRF3.</text>
</comment>
<comment type="domain">
    <text evidence="1">The pLxIS motif targets host IRF3 for degradation; however phosphorylation of NSP1 pLxIS motif is not required for its activity.</text>
</comment>
<comment type="similarity">
    <text evidence="1">Belongs to the rotavirus NSP1 family.</text>
</comment>
<dbReference type="EMBL" id="L11575">
    <property type="protein sequence ID" value="AAA18011.1"/>
    <property type="molecule type" value="Unassigned_DNA"/>
</dbReference>
<dbReference type="Proteomes" id="UP000008657">
    <property type="component" value="Genome"/>
</dbReference>
<dbReference type="GO" id="GO:0030430">
    <property type="term" value="C:host cell cytoplasm"/>
    <property type="evidence" value="ECO:0007669"/>
    <property type="project" value="UniProtKB-UniRule"/>
</dbReference>
<dbReference type="GO" id="GO:0044163">
    <property type="term" value="C:host cytoskeleton"/>
    <property type="evidence" value="ECO:0007669"/>
    <property type="project" value="UniProtKB-SubCell"/>
</dbReference>
<dbReference type="GO" id="GO:0046872">
    <property type="term" value="F:metal ion binding"/>
    <property type="evidence" value="ECO:0007669"/>
    <property type="project" value="UniProtKB-UniRule"/>
</dbReference>
<dbReference type="GO" id="GO:0003723">
    <property type="term" value="F:RNA binding"/>
    <property type="evidence" value="ECO:0007669"/>
    <property type="project" value="UniProtKB-UniRule"/>
</dbReference>
<dbReference type="GO" id="GO:0039548">
    <property type="term" value="P:symbiont-mediated suppression of host cytoplasmic pattern recognition receptor signaling pathway via inhibition of IRF3 activity"/>
    <property type="evidence" value="ECO:0007669"/>
    <property type="project" value="UniProtKB-UniRule"/>
</dbReference>
<dbReference type="GO" id="GO:0039557">
    <property type="term" value="P:symbiont-mediated suppression of host cytoplasmic pattern recognition receptor signaling pathway via inhibition of IRF7 activity"/>
    <property type="evidence" value="ECO:0007669"/>
    <property type="project" value="UniProtKB-UniRule"/>
</dbReference>
<dbReference type="HAMAP" id="MF_04088">
    <property type="entry name" value="ROTA_NSP1"/>
    <property type="match status" value="1"/>
</dbReference>
<dbReference type="InterPro" id="IPR002148">
    <property type="entry name" value="Rotavirus_NSP1"/>
</dbReference>
<dbReference type="Pfam" id="PF00981">
    <property type="entry name" value="Rota_NS53"/>
    <property type="match status" value="1"/>
</dbReference>
<name>NSP1_ROTBU</name>
<sequence length="491" mass="58580">MATFKDACYHYKKLNKLNSLVLKLGANDEWRPAPVTKYKGWCLDCCQYTNLTYCRGCALYHVCQWCSQYNRCFLDEEPHLLRMRTFKDVITKEDIEGLLTMYEILFPINEKLVNKFINSVKQRKCRTEYLLEWYNHLLMPITLQALTIKLEDSTYYIFGYYDCMEHENQTPFQFINLLEKYDKLLLDDRNFNRMLHLPTILQQEYALRYFSKSRFLSKGKKRLNRNDFSDNLVEDRHSPTSLIQVVRNCISTHPNDYEWNKACTFVVDARNYINIMNSSYTEHYSVSQRCKLFTKYKFGIISKLVKPNYIFSSHESCALNVHNCRWCQINSHYKVWEDFRLKKIYNNVMDFIRALVKSNGNVGQCSSQESVYKCIPDIFLICKMEKWNEAVEVLFNYLEPVDINGTEYVLLDYEVNWEVRGLVMQSMDGKVPRILNINDTKKILSTIIFDWFDVRYMRETPMTTSTTNQLRTLNKRNELIDEYDLELSDVE</sequence>
<organismHost>
    <name type="scientific">Bos taurus</name>
    <name type="common">Bovine</name>
    <dbReference type="NCBI Taxonomy" id="9913"/>
</organismHost>
<reference key="1">
    <citation type="journal article" date="1994" name="Virology">
        <title>The carboxyl-half of the rotavirus nonstructural protein NS53 (NSP1) is not required for virus replication.</title>
        <authorList>
            <person name="Hua J.J."/>
            <person name="Patton J.T."/>
        </authorList>
    </citation>
    <scope>NUCLEOTIDE SEQUENCE [GENOMIC RNA]</scope>
</reference>
<proteinExistence type="inferred from homology"/>
<feature type="chain" id="PRO_0000369079" description="Non-structural protein 1">
    <location>
        <begin position="1"/>
        <end position="491"/>
    </location>
</feature>
<feature type="region of interest" description="RNA-binding" evidence="1">
    <location>
        <begin position="1"/>
        <end position="81"/>
    </location>
</feature>
<feature type="region of interest" description="Zinc-binding domain" evidence="1">
    <location>
        <begin position="42"/>
        <end position="79"/>
    </location>
</feature>
<feature type="region of interest" description="Important for cytoskeleton localization" evidence="1">
    <location>
        <begin position="82"/>
        <end position="176"/>
    </location>
</feature>
<feature type="region of interest" description="Interaction with host IRF3" evidence="1">
    <location>
        <begin position="320"/>
        <end position="491"/>
    </location>
</feature>
<feature type="short sequence motif" description="pLxIS motif" evidence="1">
    <location>
        <begin position="485"/>
        <end position="488"/>
    </location>
</feature>
<organism>
    <name type="scientific">Rotavirus A (strain RVA/Cow/United Kingdom/UK/1975/G6P7[5])</name>
    <name type="common">RV-A</name>
    <dbReference type="NCBI Taxonomy" id="10934"/>
    <lineage>
        <taxon>Viruses</taxon>
        <taxon>Riboviria</taxon>
        <taxon>Orthornavirae</taxon>
        <taxon>Duplornaviricota</taxon>
        <taxon>Resentoviricetes</taxon>
        <taxon>Reovirales</taxon>
        <taxon>Sedoreoviridae</taxon>
        <taxon>Rotavirus</taxon>
        <taxon>Rotavirus A</taxon>
    </lineage>
</organism>